<comment type="function">
    <text evidence="2">Hydrolyzes fatty acids from S-acylated cysteine residues in proteins with a strong preference for palmitoylated G-alpha proteins over other acyl substrates. Mediates the deacylation of G-alpha proteins such as GPA1 in vivo, but has weak or no activity toward palmitoylated Ras proteins. Has weak lysophospholipase activity in vitro; however such activity may not exist in vivo.</text>
</comment>
<comment type="catalytic activity">
    <reaction evidence="2">
        <text>S-hexadecanoyl-L-cysteinyl-[protein] + H2O = L-cysteinyl-[protein] + hexadecanoate + H(+)</text>
        <dbReference type="Rhea" id="RHEA:19233"/>
        <dbReference type="Rhea" id="RHEA-COMP:10131"/>
        <dbReference type="Rhea" id="RHEA-COMP:11032"/>
        <dbReference type="ChEBI" id="CHEBI:7896"/>
        <dbReference type="ChEBI" id="CHEBI:15377"/>
        <dbReference type="ChEBI" id="CHEBI:15378"/>
        <dbReference type="ChEBI" id="CHEBI:29950"/>
        <dbReference type="ChEBI" id="CHEBI:74151"/>
        <dbReference type="EC" id="3.1.2.22"/>
    </reaction>
</comment>
<comment type="subcellular location">
    <subcellularLocation>
        <location evidence="3">Cytoplasm</location>
    </subcellularLocation>
    <subcellularLocation>
        <location evidence="3">Nucleus</location>
    </subcellularLocation>
</comment>
<comment type="similarity">
    <text evidence="4">Belongs to the AB hydrolase superfamily. AB hydrolase 2 family.</text>
</comment>
<organism>
    <name type="scientific">Schizosaccharomyces pombe (strain 972 / ATCC 24843)</name>
    <name type="common">Fission yeast</name>
    <dbReference type="NCBI Taxonomy" id="284812"/>
    <lineage>
        <taxon>Eukaryota</taxon>
        <taxon>Fungi</taxon>
        <taxon>Dikarya</taxon>
        <taxon>Ascomycota</taxon>
        <taxon>Taphrinomycotina</taxon>
        <taxon>Schizosaccharomycetes</taxon>
        <taxon>Schizosaccharomycetales</taxon>
        <taxon>Schizosaccharomycetaceae</taxon>
        <taxon>Schizosaccharomyces</taxon>
    </lineage>
</organism>
<protein>
    <recommendedName>
        <fullName>Acyl-protein thioesterase 1</fullName>
        <ecNumber evidence="2">3.1.2.-</ecNumber>
    </recommendedName>
    <alternativeName>
        <fullName>Palmitoyl-protein hydrolase</fullName>
        <ecNumber evidence="2">3.1.2.22</ecNumber>
    </alternativeName>
</protein>
<proteinExistence type="inferred from homology"/>
<gene>
    <name type="ORF">SPAC8E11.04c</name>
</gene>
<reference key="1">
    <citation type="journal article" date="2002" name="Nature">
        <title>The genome sequence of Schizosaccharomyces pombe.</title>
        <authorList>
            <person name="Wood V."/>
            <person name="Gwilliam R."/>
            <person name="Rajandream M.A."/>
            <person name="Lyne M.H."/>
            <person name="Lyne R."/>
            <person name="Stewart A."/>
            <person name="Sgouros J.G."/>
            <person name="Peat N."/>
            <person name="Hayles J."/>
            <person name="Baker S.G."/>
            <person name="Basham D."/>
            <person name="Bowman S."/>
            <person name="Brooks K."/>
            <person name="Brown D."/>
            <person name="Brown S."/>
            <person name="Chillingworth T."/>
            <person name="Churcher C.M."/>
            <person name="Collins M."/>
            <person name="Connor R."/>
            <person name="Cronin A."/>
            <person name="Davis P."/>
            <person name="Feltwell T."/>
            <person name="Fraser A."/>
            <person name="Gentles S."/>
            <person name="Goble A."/>
            <person name="Hamlin N."/>
            <person name="Harris D.E."/>
            <person name="Hidalgo J."/>
            <person name="Hodgson G."/>
            <person name="Holroyd S."/>
            <person name="Hornsby T."/>
            <person name="Howarth S."/>
            <person name="Huckle E.J."/>
            <person name="Hunt S."/>
            <person name="Jagels K."/>
            <person name="James K.D."/>
            <person name="Jones L."/>
            <person name="Jones M."/>
            <person name="Leather S."/>
            <person name="McDonald S."/>
            <person name="McLean J."/>
            <person name="Mooney P."/>
            <person name="Moule S."/>
            <person name="Mungall K.L."/>
            <person name="Murphy L.D."/>
            <person name="Niblett D."/>
            <person name="Odell C."/>
            <person name="Oliver K."/>
            <person name="O'Neil S."/>
            <person name="Pearson D."/>
            <person name="Quail M.A."/>
            <person name="Rabbinowitsch E."/>
            <person name="Rutherford K.M."/>
            <person name="Rutter S."/>
            <person name="Saunders D."/>
            <person name="Seeger K."/>
            <person name="Sharp S."/>
            <person name="Skelton J."/>
            <person name="Simmonds M.N."/>
            <person name="Squares R."/>
            <person name="Squares S."/>
            <person name="Stevens K."/>
            <person name="Taylor K."/>
            <person name="Taylor R.G."/>
            <person name="Tivey A."/>
            <person name="Walsh S.V."/>
            <person name="Warren T."/>
            <person name="Whitehead S."/>
            <person name="Woodward J.R."/>
            <person name="Volckaert G."/>
            <person name="Aert R."/>
            <person name="Robben J."/>
            <person name="Grymonprez B."/>
            <person name="Weltjens I."/>
            <person name="Vanstreels E."/>
            <person name="Rieger M."/>
            <person name="Schaefer M."/>
            <person name="Mueller-Auer S."/>
            <person name="Gabel C."/>
            <person name="Fuchs M."/>
            <person name="Duesterhoeft A."/>
            <person name="Fritzc C."/>
            <person name="Holzer E."/>
            <person name="Moestl D."/>
            <person name="Hilbert H."/>
            <person name="Borzym K."/>
            <person name="Langer I."/>
            <person name="Beck A."/>
            <person name="Lehrach H."/>
            <person name="Reinhardt R."/>
            <person name="Pohl T.M."/>
            <person name="Eger P."/>
            <person name="Zimmermann W."/>
            <person name="Wedler H."/>
            <person name="Wambutt R."/>
            <person name="Purnelle B."/>
            <person name="Goffeau A."/>
            <person name="Cadieu E."/>
            <person name="Dreano S."/>
            <person name="Gloux S."/>
            <person name="Lelaure V."/>
            <person name="Mottier S."/>
            <person name="Galibert F."/>
            <person name="Aves S.J."/>
            <person name="Xiang Z."/>
            <person name="Hunt C."/>
            <person name="Moore K."/>
            <person name="Hurst S.M."/>
            <person name="Lucas M."/>
            <person name="Rochet M."/>
            <person name="Gaillardin C."/>
            <person name="Tallada V.A."/>
            <person name="Garzon A."/>
            <person name="Thode G."/>
            <person name="Daga R.R."/>
            <person name="Cruzado L."/>
            <person name="Jimenez J."/>
            <person name="Sanchez M."/>
            <person name="del Rey F."/>
            <person name="Benito J."/>
            <person name="Dominguez A."/>
            <person name="Revuelta J.L."/>
            <person name="Moreno S."/>
            <person name="Armstrong J."/>
            <person name="Forsburg S.L."/>
            <person name="Cerutti L."/>
            <person name="Lowe T."/>
            <person name="McCombie W.R."/>
            <person name="Paulsen I."/>
            <person name="Potashkin J."/>
            <person name="Shpakovski G.V."/>
            <person name="Ussery D."/>
            <person name="Barrell B.G."/>
            <person name="Nurse P."/>
        </authorList>
    </citation>
    <scope>NUCLEOTIDE SEQUENCE [LARGE SCALE GENOMIC DNA]</scope>
    <source>
        <strain>972 / ATCC 24843</strain>
    </source>
</reference>
<reference key="2">
    <citation type="journal article" date="2006" name="Nat. Biotechnol.">
        <title>ORFeome cloning and global analysis of protein localization in the fission yeast Schizosaccharomyces pombe.</title>
        <authorList>
            <person name="Matsuyama A."/>
            <person name="Arai R."/>
            <person name="Yashiroda Y."/>
            <person name="Shirai A."/>
            <person name="Kamata A."/>
            <person name="Sekido S."/>
            <person name="Kobayashi Y."/>
            <person name="Hashimoto A."/>
            <person name="Hamamoto M."/>
            <person name="Hiraoka Y."/>
            <person name="Horinouchi S."/>
            <person name="Yoshida M."/>
        </authorList>
    </citation>
    <scope>SUBCELLULAR LOCATION [LARGE SCALE ANALYSIS]</scope>
</reference>
<keyword id="KW-0963">Cytoplasm</keyword>
<keyword id="KW-0276">Fatty acid metabolism</keyword>
<keyword id="KW-0378">Hydrolase</keyword>
<keyword id="KW-0443">Lipid metabolism</keyword>
<keyword id="KW-0539">Nucleus</keyword>
<keyword id="KW-1185">Reference proteome</keyword>
<keyword id="KW-0719">Serine esterase</keyword>
<sequence>MTAKLNSVIINPSVAHTATVIFLHGLGDSGQGWSFMANTWSNFKHIKWIFPNAPSIPVTVNNGMKMPAWYDIYSFADMKREDENGILRSAGQLHELIDAELALGIPSDRILIGGFSQGCMVSLYAGLTYPKRLAGIMGHSGFLPLASKFPSALSRVAKEIPILLTYMTEDPIVPSVLSSASAKYLINNLQLKCLDRPFEGDAHSLSSESFMAMYKFTQTVIGSP</sequence>
<name>APTH1_SCHPO</name>
<dbReference type="EC" id="3.1.2.-" evidence="2"/>
<dbReference type="EC" id="3.1.2.22" evidence="2"/>
<dbReference type="EMBL" id="CU329670">
    <property type="protein sequence ID" value="CAA17025.1"/>
    <property type="molecule type" value="Genomic_DNA"/>
</dbReference>
<dbReference type="PIR" id="T39158">
    <property type="entry name" value="T39158"/>
</dbReference>
<dbReference type="RefSeq" id="NP_594165.1">
    <property type="nucleotide sequence ID" value="NM_001019589.2"/>
</dbReference>
<dbReference type="SMR" id="O42881"/>
<dbReference type="BioGRID" id="279333">
    <property type="interactions" value="1"/>
</dbReference>
<dbReference type="FunCoup" id="O42881">
    <property type="interactions" value="489"/>
</dbReference>
<dbReference type="STRING" id="284812.O42881"/>
<dbReference type="ESTHER" id="schpo-APTH1">
    <property type="family name" value="LYsophospholipase_carboxylesterase"/>
</dbReference>
<dbReference type="MEROPS" id="S09.952"/>
<dbReference type="iPTMnet" id="O42881"/>
<dbReference type="PaxDb" id="4896-SPAC8E11.04c.1"/>
<dbReference type="EnsemblFungi" id="SPAC8E11.04c.1">
    <property type="protein sequence ID" value="SPAC8E11.04c.1:pep"/>
    <property type="gene ID" value="SPAC8E11.04c"/>
</dbReference>
<dbReference type="KEGG" id="spo:2542889"/>
<dbReference type="PomBase" id="SPAC8E11.04c"/>
<dbReference type="VEuPathDB" id="FungiDB:SPAC8E11.04c"/>
<dbReference type="eggNOG" id="KOG2112">
    <property type="taxonomic scope" value="Eukaryota"/>
</dbReference>
<dbReference type="HOGENOM" id="CLU_049413_3_5_1"/>
<dbReference type="InParanoid" id="O42881"/>
<dbReference type="OMA" id="GLTYPHK"/>
<dbReference type="PhylomeDB" id="O42881"/>
<dbReference type="Reactome" id="R-SPO-203615">
    <property type="pathway name" value="eNOS activation"/>
</dbReference>
<dbReference type="Reactome" id="R-SPO-9648002">
    <property type="pathway name" value="RAS processing"/>
</dbReference>
<dbReference type="PRO" id="PR:O42881"/>
<dbReference type="Proteomes" id="UP000002485">
    <property type="component" value="Chromosome I"/>
</dbReference>
<dbReference type="GO" id="GO:0005737">
    <property type="term" value="C:cytoplasm"/>
    <property type="evidence" value="ECO:0000318"/>
    <property type="project" value="GO_Central"/>
</dbReference>
<dbReference type="GO" id="GO:0005829">
    <property type="term" value="C:cytosol"/>
    <property type="evidence" value="ECO:0007005"/>
    <property type="project" value="PomBase"/>
</dbReference>
<dbReference type="GO" id="GO:0005634">
    <property type="term" value="C:nucleus"/>
    <property type="evidence" value="ECO:0007005"/>
    <property type="project" value="PomBase"/>
</dbReference>
<dbReference type="GO" id="GO:0052689">
    <property type="term" value="F:carboxylic ester hydrolase activity"/>
    <property type="evidence" value="ECO:0000318"/>
    <property type="project" value="GO_Central"/>
</dbReference>
<dbReference type="GO" id="GO:0008474">
    <property type="term" value="F:palmitoyl-(protein) hydrolase activity"/>
    <property type="evidence" value="ECO:0000318"/>
    <property type="project" value="GO_Central"/>
</dbReference>
<dbReference type="GO" id="GO:0006631">
    <property type="term" value="P:fatty acid metabolic process"/>
    <property type="evidence" value="ECO:0007669"/>
    <property type="project" value="UniProtKB-KW"/>
</dbReference>
<dbReference type="Gene3D" id="3.40.50.1820">
    <property type="entry name" value="alpha/beta hydrolase"/>
    <property type="match status" value="1"/>
</dbReference>
<dbReference type="InterPro" id="IPR029058">
    <property type="entry name" value="AB_hydrolase_fold"/>
</dbReference>
<dbReference type="InterPro" id="IPR050565">
    <property type="entry name" value="LYPA1-2/EST-like"/>
</dbReference>
<dbReference type="InterPro" id="IPR003140">
    <property type="entry name" value="PLipase/COase/thioEstase"/>
</dbReference>
<dbReference type="PANTHER" id="PTHR10655:SF17">
    <property type="entry name" value="LYSOPHOSPHOLIPASE-LIKE PROTEIN 1"/>
    <property type="match status" value="1"/>
</dbReference>
<dbReference type="PANTHER" id="PTHR10655">
    <property type="entry name" value="LYSOPHOSPHOLIPASE-RELATED"/>
    <property type="match status" value="1"/>
</dbReference>
<dbReference type="Pfam" id="PF02230">
    <property type="entry name" value="Abhydrolase_2"/>
    <property type="match status" value="1"/>
</dbReference>
<dbReference type="SUPFAM" id="SSF53474">
    <property type="entry name" value="alpha/beta-Hydrolases"/>
    <property type="match status" value="1"/>
</dbReference>
<accession>O42881</accession>
<evidence type="ECO:0000250" key="1"/>
<evidence type="ECO:0000250" key="2">
    <source>
        <dbReference type="UniProtKB" id="Q12354"/>
    </source>
</evidence>
<evidence type="ECO:0000269" key="3">
    <source>
    </source>
</evidence>
<evidence type="ECO:0000305" key="4"/>
<feature type="chain" id="PRO_0000316195" description="Acyl-protein thioesterase 1">
    <location>
        <begin position="1"/>
        <end position="224"/>
    </location>
</feature>
<feature type="active site" description="Charge relay system" evidence="1">
    <location>
        <position position="116"/>
    </location>
</feature>
<feature type="active site" description="Charge relay system" evidence="1">
    <location>
        <position position="170"/>
    </location>
</feature>
<feature type="active site" description="Charge relay system" evidence="1">
    <location>
        <position position="203"/>
    </location>
</feature>